<proteinExistence type="evidence at transcript level"/>
<feature type="chain" id="PRO_0000204750" description="Protein D2">
    <location>
        <begin position="1" status="less than"/>
        <end position="114"/>
    </location>
</feature>
<feature type="non-terminal residue">
    <location>
        <position position="1"/>
    </location>
</feature>
<keyword id="KW-1185">Reference proteome</keyword>
<sequence length="114" mass="12786">WDAEPGALYTLVMTDPDVPSRKNPVFREWHHWLIINISGQNVSSGTVLSDYIGSGPPKGTGLHRYVFLVYKQPGSITDTQHGGNRRNFKVMDFANKHHLGNPVAGNFFQAKHED</sequence>
<protein>
    <recommendedName>
        <fullName>Protein D2</fullName>
    </recommendedName>
</protein>
<reference key="1">
    <citation type="journal article" date="1996" name="Gene">
        <title>Onchocerca volvulus: identification of cDNAs encoding a putative phosphatidyl-ethanolamine-binding protein and a putative partially processed mRNA precursor.</title>
        <authorList>
            <person name="Erttmann K.D."/>
            <person name="Gallin M.Y."/>
        </authorList>
    </citation>
    <scope>NUCLEOTIDE SEQUENCE [MRNA]</scope>
</reference>
<dbReference type="EMBL" id="X87990">
    <property type="protein sequence ID" value="CAA61243.1"/>
    <property type="molecule type" value="mRNA"/>
</dbReference>
<dbReference type="PIR" id="PC4215">
    <property type="entry name" value="PC4215"/>
</dbReference>
<dbReference type="SMR" id="P54187"/>
<dbReference type="STRING" id="6282.P54187"/>
<dbReference type="MEROPS" id="I51.002"/>
<dbReference type="HOGENOM" id="CLU_043994_3_0_1"/>
<dbReference type="Proteomes" id="UP000024404">
    <property type="component" value="Unassembled WGS sequence"/>
</dbReference>
<dbReference type="CDD" id="cd00866">
    <property type="entry name" value="PEBP_euk"/>
    <property type="match status" value="1"/>
</dbReference>
<dbReference type="Gene3D" id="3.90.280.10">
    <property type="entry name" value="PEBP-like"/>
    <property type="match status" value="1"/>
</dbReference>
<dbReference type="InterPro" id="IPR008914">
    <property type="entry name" value="PEBP"/>
</dbReference>
<dbReference type="InterPro" id="IPR036610">
    <property type="entry name" value="PEBP-like_sf"/>
</dbReference>
<dbReference type="InterPro" id="IPR035810">
    <property type="entry name" value="PEBP_euk"/>
</dbReference>
<dbReference type="InterPro" id="IPR001858">
    <property type="entry name" value="Phosphatidylethanolamine-bd_CS"/>
</dbReference>
<dbReference type="PANTHER" id="PTHR11362">
    <property type="entry name" value="PHOSPHATIDYLETHANOLAMINE-BINDING PROTEIN"/>
    <property type="match status" value="1"/>
</dbReference>
<dbReference type="PANTHER" id="PTHR11362:SF82">
    <property type="entry name" value="PHOSPHATIDYLETHANOLAMINE-BINDING PROTEIN 4"/>
    <property type="match status" value="1"/>
</dbReference>
<dbReference type="Pfam" id="PF01161">
    <property type="entry name" value="PBP"/>
    <property type="match status" value="1"/>
</dbReference>
<dbReference type="SUPFAM" id="SSF49777">
    <property type="entry name" value="PEBP-like"/>
    <property type="match status" value="1"/>
</dbReference>
<dbReference type="PROSITE" id="PS01220">
    <property type="entry name" value="PBP"/>
    <property type="match status" value="1"/>
</dbReference>
<accession>P54187</accession>
<comment type="similarity">
    <text evidence="1">Belongs to the phosphatidylethanolamine-binding protein family.</text>
</comment>
<evidence type="ECO:0000305" key="1"/>
<organism>
    <name type="scientific">Onchocerca volvulus</name>
    <dbReference type="NCBI Taxonomy" id="6282"/>
    <lineage>
        <taxon>Eukaryota</taxon>
        <taxon>Metazoa</taxon>
        <taxon>Ecdysozoa</taxon>
        <taxon>Nematoda</taxon>
        <taxon>Chromadorea</taxon>
        <taxon>Rhabditida</taxon>
        <taxon>Spirurina</taxon>
        <taxon>Spiruromorpha</taxon>
        <taxon>Filarioidea</taxon>
        <taxon>Onchocercidae</taxon>
        <taxon>Onchocerca</taxon>
    </lineage>
</organism>
<gene>
    <name type="primary">D2</name>
</gene>
<name>D2_ONCVO</name>